<reference key="1">
    <citation type="journal article" date="2004" name="Nature">
        <title>Genome evolution in yeasts.</title>
        <authorList>
            <person name="Dujon B."/>
            <person name="Sherman D."/>
            <person name="Fischer G."/>
            <person name="Durrens P."/>
            <person name="Casaregola S."/>
            <person name="Lafontaine I."/>
            <person name="de Montigny J."/>
            <person name="Marck C."/>
            <person name="Neuveglise C."/>
            <person name="Talla E."/>
            <person name="Goffard N."/>
            <person name="Frangeul L."/>
            <person name="Aigle M."/>
            <person name="Anthouard V."/>
            <person name="Babour A."/>
            <person name="Barbe V."/>
            <person name="Barnay S."/>
            <person name="Blanchin S."/>
            <person name="Beckerich J.-M."/>
            <person name="Beyne E."/>
            <person name="Bleykasten C."/>
            <person name="Boisrame A."/>
            <person name="Boyer J."/>
            <person name="Cattolico L."/>
            <person name="Confanioleri F."/>
            <person name="de Daruvar A."/>
            <person name="Despons L."/>
            <person name="Fabre E."/>
            <person name="Fairhead C."/>
            <person name="Ferry-Dumazet H."/>
            <person name="Groppi A."/>
            <person name="Hantraye F."/>
            <person name="Hennequin C."/>
            <person name="Jauniaux N."/>
            <person name="Joyet P."/>
            <person name="Kachouri R."/>
            <person name="Kerrest A."/>
            <person name="Koszul R."/>
            <person name="Lemaire M."/>
            <person name="Lesur I."/>
            <person name="Ma L."/>
            <person name="Muller H."/>
            <person name="Nicaud J.-M."/>
            <person name="Nikolski M."/>
            <person name="Oztas S."/>
            <person name="Ozier-Kalogeropoulos O."/>
            <person name="Pellenz S."/>
            <person name="Potier S."/>
            <person name="Richard G.-F."/>
            <person name="Straub M.-L."/>
            <person name="Suleau A."/>
            <person name="Swennen D."/>
            <person name="Tekaia F."/>
            <person name="Wesolowski-Louvel M."/>
            <person name="Westhof E."/>
            <person name="Wirth B."/>
            <person name="Zeniou-Meyer M."/>
            <person name="Zivanovic Y."/>
            <person name="Bolotin-Fukuhara M."/>
            <person name="Thierry A."/>
            <person name="Bouchier C."/>
            <person name="Caudron B."/>
            <person name="Scarpelli C."/>
            <person name="Gaillardin C."/>
            <person name="Weissenbach J."/>
            <person name="Wincker P."/>
            <person name="Souciet J.-L."/>
        </authorList>
    </citation>
    <scope>NUCLEOTIDE SEQUENCE [LARGE SCALE GENOMIC DNA]</scope>
    <source>
        <strain>CLIB 122 / E 150</strain>
    </source>
</reference>
<feature type="chain" id="PRO_0000213413" description="UDP-galactose transporter homolog 1">
    <location>
        <begin position="1"/>
        <end position="365"/>
    </location>
</feature>
<feature type="transmembrane region" description="Helical" evidence="2">
    <location>
        <begin position="42"/>
        <end position="62"/>
    </location>
</feature>
<feature type="transmembrane region" description="Helical" evidence="2">
    <location>
        <begin position="80"/>
        <end position="100"/>
    </location>
</feature>
<feature type="transmembrane region" description="Helical" evidence="2">
    <location>
        <begin position="182"/>
        <end position="202"/>
    </location>
</feature>
<feature type="transmembrane region" description="Helical" evidence="2">
    <location>
        <begin position="206"/>
        <end position="226"/>
    </location>
</feature>
<feature type="transmembrane region" description="Helical" evidence="2">
    <location>
        <begin position="249"/>
        <end position="269"/>
    </location>
</feature>
<feature type="transmembrane region" description="Helical" evidence="2">
    <location>
        <begin position="289"/>
        <end position="309"/>
    </location>
</feature>
<feature type="transmembrane region" description="Helical" evidence="2">
    <location>
        <begin position="315"/>
        <end position="335"/>
    </location>
</feature>
<feature type="transmembrane region" description="Helical" evidence="2">
    <location>
        <begin position="339"/>
        <end position="359"/>
    </location>
</feature>
<feature type="glycosylation site" description="N-linked (GlcNAc...) asparagine" evidence="2">
    <location>
        <position position="115"/>
    </location>
</feature>
<feature type="glycosylation site" description="N-linked (GlcNAc...) asparagine" evidence="2">
    <location>
        <position position="231"/>
    </location>
</feature>
<comment type="function">
    <text evidence="1">May be involved in specific transport of UDP-Gal from the cytosol to the Golgi lumen. Involved in the maintenance of optimal conditions for the folding of secretory pathway proteins in the endoplasmic reticulum (By similarity).</text>
</comment>
<comment type="subcellular location">
    <subcellularLocation>
        <location evidence="1">Endoplasmic reticulum membrane</location>
        <topology evidence="1">Multi-pass membrane protein</topology>
    </subcellularLocation>
</comment>
<comment type="similarity">
    <text evidence="3">Belongs to the nucleotide-sugar transporter family. SLC35B subfamily.</text>
</comment>
<proteinExistence type="inferred from homology"/>
<sequence length="365" mass="40292">MSELRKRNQAAIADLSENIEVTETVELTEKKPETTKSTKGHIIDLIICVSGIYASFLTWAVLQERIATTPYGPDNKIFRASLVINTVQSFLAAAVGYAYLQYKQSRRAAKGLKKNTTVFDSMYTLKQLSLVALSQSLASPLSYTALKYVDYLTSILAKSCKLIPLMALQVTLYRRKFPAYKYAVVVLVTIGVSMFTIFHAAPKKASGAGSEHQLYGLGLLGISMLLDGLTNSTQDQIFRKNADITGPHVMCGLNLLTGVFTTVSLLTFSRPQLDTAIAFIRLHPEIMRDIVLFGLCGAVGQVFIFQTLEKFGSVVLVTVNVTRKMFSMLLSVVWFNHRLTLGQWAGVAAVFGGIGFEAWMKMKKN</sequence>
<protein>
    <recommendedName>
        <fullName>UDP-galactose transporter homolog 1</fullName>
    </recommendedName>
</protein>
<gene>
    <name type="primary">HUT1</name>
    <name type="ordered locus">YALI0E22957g</name>
</gene>
<organism>
    <name type="scientific">Yarrowia lipolytica (strain CLIB 122 / E 150)</name>
    <name type="common">Yeast</name>
    <name type="synonym">Candida lipolytica</name>
    <dbReference type="NCBI Taxonomy" id="284591"/>
    <lineage>
        <taxon>Eukaryota</taxon>
        <taxon>Fungi</taxon>
        <taxon>Dikarya</taxon>
        <taxon>Ascomycota</taxon>
        <taxon>Saccharomycotina</taxon>
        <taxon>Dipodascomycetes</taxon>
        <taxon>Dipodascales</taxon>
        <taxon>Dipodascales incertae sedis</taxon>
        <taxon>Yarrowia</taxon>
    </lineage>
</organism>
<keyword id="KW-0256">Endoplasmic reticulum</keyword>
<keyword id="KW-0325">Glycoprotein</keyword>
<keyword id="KW-0472">Membrane</keyword>
<keyword id="KW-1185">Reference proteome</keyword>
<keyword id="KW-0762">Sugar transport</keyword>
<keyword id="KW-0812">Transmembrane</keyword>
<keyword id="KW-1133">Transmembrane helix</keyword>
<keyword id="KW-0813">Transport</keyword>
<dbReference type="EMBL" id="CR382131">
    <property type="protein sequence ID" value="CAG79886.1"/>
    <property type="molecule type" value="Genomic_DNA"/>
</dbReference>
<dbReference type="RefSeq" id="XP_504287.1">
    <property type="nucleotide sequence ID" value="XM_504287.1"/>
</dbReference>
<dbReference type="SMR" id="Q6C4X5"/>
<dbReference type="FunCoup" id="Q6C4X5">
    <property type="interactions" value="493"/>
</dbReference>
<dbReference type="STRING" id="284591.Q6C4X5"/>
<dbReference type="GlyCosmos" id="Q6C4X5">
    <property type="glycosylation" value="2 sites, No reported glycans"/>
</dbReference>
<dbReference type="EnsemblFungi" id="CAG79886">
    <property type="protein sequence ID" value="CAG79886"/>
    <property type="gene ID" value="YALI0_E22957g"/>
</dbReference>
<dbReference type="KEGG" id="yli:2912920"/>
<dbReference type="VEuPathDB" id="FungiDB:YALI0_E22957g"/>
<dbReference type="HOGENOM" id="CLU_036019_0_2_1"/>
<dbReference type="InParanoid" id="Q6C4X5"/>
<dbReference type="OMA" id="CGAIGQV"/>
<dbReference type="OrthoDB" id="121439at4891"/>
<dbReference type="Proteomes" id="UP000001300">
    <property type="component" value="Chromosome E"/>
</dbReference>
<dbReference type="GO" id="GO:0005789">
    <property type="term" value="C:endoplasmic reticulum membrane"/>
    <property type="evidence" value="ECO:0000318"/>
    <property type="project" value="GO_Central"/>
</dbReference>
<dbReference type="GO" id="GO:0000139">
    <property type="term" value="C:Golgi membrane"/>
    <property type="evidence" value="ECO:0000318"/>
    <property type="project" value="GO_Central"/>
</dbReference>
<dbReference type="GO" id="GO:0005459">
    <property type="term" value="F:UDP-galactose transmembrane transporter activity"/>
    <property type="evidence" value="ECO:0000318"/>
    <property type="project" value="GO_Central"/>
</dbReference>
<dbReference type="GO" id="GO:0005460">
    <property type="term" value="F:UDP-glucose transmembrane transporter activity"/>
    <property type="evidence" value="ECO:0000318"/>
    <property type="project" value="GO_Central"/>
</dbReference>
<dbReference type="GO" id="GO:0072334">
    <property type="term" value="P:UDP-galactose transmembrane transport"/>
    <property type="evidence" value="ECO:0000318"/>
    <property type="project" value="GO_Central"/>
</dbReference>
<dbReference type="GO" id="GO:0120112">
    <property type="term" value="P:UDP-glucose transmembrane transport into endoplasmic reticulum"/>
    <property type="evidence" value="ECO:0007669"/>
    <property type="project" value="EnsemblFungi"/>
</dbReference>
<dbReference type="InterPro" id="IPR013657">
    <property type="entry name" value="SCL35B1-4/HUT1"/>
</dbReference>
<dbReference type="PANTHER" id="PTHR10778">
    <property type="entry name" value="SOLUTE CARRIER FAMILY 35 MEMBER B"/>
    <property type="match status" value="1"/>
</dbReference>
<dbReference type="PANTHER" id="PTHR10778:SF10">
    <property type="entry name" value="SOLUTE CARRIER FAMILY 35 MEMBER B1"/>
    <property type="match status" value="1"/>
</dbReference>
<dbReference type="Pfam" id="PF08449">
    <property type="entry name" value="UAA"/>
    <property type="match status" value="1"/>
</dbReference>
<dbReference type="SUPFAM" id="SSF103481">
    <property type="entry name" value="Multidrug resistance efflux transporter EmrE"/>
    <property type="match status" value="1"/>
</dbReference>
<evidence type="ECO:0000250" key="1"/>
<evidence type="ECO:0000255" key="2"/>
<evidence type="ECO:0000305" key="3"/>
<accession>Q6C4X5</accession>
<name>HUT1_YARLI</name>